<protein>
    <recommendedName>
        <fullName evidence="1">DNA replication and repair protein RecF</fullName>
    </recommendedName>
</protein>
<dbReference type="EMBL" id="CU468230">
    <property type="protein sequence ID" value="CAO99424.1"/>
    <property type="molecule type" value="Genomic_DNA"/>
</dbReference>
<dbReference type="SMR" id="B0VMK2"/>
<dbReference type="KEGG" id="abm:ABSDF0003"/>
<dbReference type="HOGENOM" id="CLU_040267_0_0_6"/>
<dbReference type="Proteomes" id="UP000001741">
    <property type="component" value="Chromosome"/>
</dbReference>
<dbReference type="GO" id="GO:0005737">
    <property type="term" value="C:cytoplasm"/>
    <property type="evidence" value="ECO:0007669"/>
    <property type="project" value="UniProtKB-SubCell"/>
</dbReference>
<dbReference type="GO" id="GO:0005524">
    <property type="term" value="F:ATP binding"/>
    <property type="evidence" value="ECO:0007669"/>
    <property type="project" value="UniProtKB-UniRule"/>
</dbReference>
<dbReference type="GO" id="GO:0003697">
    <property type="term" value="F:single-stranded DNA binding"/>
    <property type="evidence" value="ECO:0007669"/>
    <property type="project" value="UniProtKB-UniRule"/>
</dbReference>
<dbReference type="GO" id="GO:0006260">
    <property type="term" value="P:DNA replication"/>
    <property type="evidence" value="ECO:0007669"/>
    <property type="project" value="UniProtKB-UniRule"/>
</dbReference>
<dbReference type="GO" id="GO:0000731">
    <property type="term" value="P:DNA synthesis involved in DNA repair"/>
    <property type="evidence" value="ECO:0007669"/>
    <property type="project" value="TreeGrafter"/>
</dbReference>
<dbReference type="GO" id="GO:0006302">
    <property type="term" value="P:double-strand break repair"/>
    <property type="evidence" value="ECO:0007669"/>
    <property type="project" value="TreeGrafter"/>
</dbReference>
<dbReference type="GO" id="GO:0009432">
    <property type="term" value="P:SOS response"/>
    <property type="evidence" value="ECO:0007669"/>
    <property type="project" value="UniProtKB-UniRule"/>
</dbReference>
<dbReference type="Gene3D" id="3.40.50.300">
    <property type="entry name" value="P-loop containing nucleotide triphosphate hydrolases"/>
    <property type="match status" value="1"/>
</dbReference>
<dbReference type="Gene3D" id="1.20.1050.90">
    <property type="entry name" value="RecF/RecN/SMC, N-terminal domain"/>
    <property type="match status" value="1"/>
</dbReference>
<dbReference type="HAMAP" id="MF_00365">
    <property type="entry name" value="RecF"/>
    <property type="match status" value="1"/>
</dbReference>
<dbReference type="InterPro" id="IPR001238">
    <property type="entry name" value="DNA-binding_RecF"/>
</dbReference>
<dbReference type="InterPro" id="IPR027417">
    <property type="entry name" value="P-loop_NTPase"/>
</dbReference>
<dbReference type="InterPro" id="IPR003395">
    <property type="entry name" value="RecF/RecN/SMC_N"/>
</dbReference>
<dbReference type="InterPro" id="IPR042174">
    <property type="entry name" value="RecF_2"/>
</dbReference>
<dbReference type="NCBIfam" id="TIGR00611">
    <property type="entry name" value="recf"/>
    <property type="match status" value="1"/>
</dbReference>
<dbReference type="PANTHER" id="PTHR32182">
    <property type="entry name" value="DNA REPLICATION AND REPAIR PROTEIN RECF"/>
    <property type="match status" value="1"/>
</dbReference>
<dbReference type="PANTHER" id="PTHR32182:SF0">
    <property type="entry name" value="DNA REPLICATION AND REPAIR PROTEIN RECF"/>
    <property type="match status" value="1"/>
</dbReference>
<dbReference type="Pfam" id="PF02463">
    <property type="entry name" value="SMC_N"/>
    <property type="match status" value="1"/>
</dbReference>
<dbReference type="SUPFAM" id="SSF52540">
    <property type="entry name" value="P-loop containing nucleoside triphosphate hydrolases"/>
    <property type="match status" value="1"/>
</dbReference>
<keyword id="KW-0067">ATP-binding</keyword>
<keyword id="KW-0963">Cytoplasm</keyword>
<keyword id="KW-0227">DNA damage</keyword>
<keyword id="KW-0234">DNA repair</keyword>
<keyword id="KW-0235">DNA replication</keyword>
<keyword id="KW-0238">DNA-binding</keyword>
<keyword id="KW-0547">Nucleotide-binding</keyword>
<keyword id="KW-0742">SOS response</keyword>
<gene>
    <name evidence="1" type="primary">recF</name>
    <name type="ordered locus">ABSDF0003</name>
</gene>
<sequence length="360" mass="41192">MHLTRLNIERVRNLKTVALHGLQPFNVFYGANGSGKTSILEAIHLLATGRSFRTHIPKNYIQYEADDAIVFAQSATEKIGMQKLASGEQLMKVNGDTVATQGQLAKLLPLQHIDPQSTEIIDHGAKPRRQLLDWLMFHVEPEFYFAWQYYSRALKQRNTLLKTRRNLSLADLEPWNKMLSNYGEILHSQRLSIVEQWNVYFQNDLSQLLPDLEIELEYSPGFHTEQGLMQDLLNQHQKDIERRYTEYGPHRADLRLKTLFGHADDVLSRGQKKLLIIALKLSQIAMLHASNKETVVLLDDLTAELDLTAQQRLIERLSQLGSQVFMTTLDRASVKKHLHDLSISYQLFSVESGQVSLAAP</sequence>
<feature type="chain" id="PRO_1000205466" description="DNA replication and repair protein RecF">
    <location>
        <begin position="1"/>
        <end position="360"/>
    </location>
</feature>
<feature type="binding site" evidence="1">
    <location>
        <begin position="30"/>
        <end position="37"/>
    </location>
    <ligand>
        <name>ATP</name>
        <dbReference type="ChEBI" id="CHEBI:30616"/>
    </ligand>
</feature>
<name>RECF_ACIBS</name>
<reference key="1">
    <citation type="journal article" date="2008" name="PLoS ONE">
        <title>Comparative analysis of Acinetobacters: three genomes for three lifestyles.</title>
        <authorList>
            <person name="Vallenet D."/>
            <person name="Nordmann P."/>
            <person name="Barbe V."/>
            <person name="Poirel L."/>
            <person name="Mangenot S."/>
            <person name="Bataille E."/>
            <person name="Dossat C."/>
            <person name="Gas S."/>
            <person name="Kreimeyer A."/>
            <person name="Lenoble P."/>
            <person name="Oztas S."/>
            <person name="Poulain J."/>
            <person name="Segurens B."/>
            <person name="Robert C."/>
            <person name="Abergel C."/>
            <person name="Claverie J.-M."/>
            <person name="Raoult D."/>
            <person name="Medigue C."/>
            <person name="Weissenbach J."/>
            <person name="Cruveiller S."/>
        </authorList>
    </citation>
    <scope>NUCLEOTIDE SEQUENCE [LARGE SCALE GENOMIC DNA]</scope>
    <source>
        <strain>SDF</strain>
    </source>
</reference>
<organism>
    <name type="scientific">Acinetobacter baumannii (strain SDF)</name>
    <dbReference type="NCBI Taxonomy" id="509170"/>
    <lineage>
        <taxon>Bacteria</taxon>
        <taxon>Pseudomonadati</taxon>
        <taxon>Pseudomonadota</taxon>
        <taxon>Gammaproteobacteria</taxon>
        <taxon>Moraxellales</taxon>
        <taxon>Moraxellaceae</taxon>
        <taxon>Acinetobacter</taxon>
        <taxon>Acinetobacter calcoaceticus/baumannii complex</taxon>
    </lineage>
</organism>
<accession>B0VMK2</accession>
<comment type="function">
    <text evidence="1">The RecF protein is involved in DNA metabolism; it is required for DNA replication and normal SOS inducibility. RecF binds preferentially to single-stranded, linear DNA. It also seems to bind ATP.</text>
</comment>
<comment type="subcellular location">
    <subcellularLocation>
        <location evidence="1">Cytoplasm</location>
    </subcellularLocation>
</comment>
<comment type="similarity">
    <text evidence="1">Belongs to the RecF family.</text>
</comment>
<proteinExistence type="inferred from homology"/>
<evidence type="ECO:0000255" key="1">
    <source>
        <dbReference type="HAMAP-Rule" id="MF_00365"/>
    </source>
</evidence>